<protein>
    <recommendedName>
        <fullName evidence="1">UPF0358 protein SAV1112</fullName>
    </recommendedName>
</protein>
<comment type="similarity">
    <text evidence="1">Belongs to the UPF0358 family.</text>
</comment>
<gene>
    <name type="ordered locus">SAV1112</name>
</gene>
<proteinExistence type="inferred from homology"/>
<name>Y1112_STAAM</name>
<organism>
    <name type="scientific">Staphylococcus aureus (strain Mu50 / ATCC 700699)</name>
    <dbReference type="NCBI Taxonomy" id="158878"/>
    <lineage>
        <taxon>Bacteria</taxon>
        <taxon>Bacillati</taxon>
        <taxon>Bacillota</taxon>
        <taxon>Bacilli</taxon>
        <taxon>Bacillales</taxon>
        <taxon>Staphylococcaceae</taxon>
        <taxon>Staphylococcus</taxon>
    </lineage>
</organism>
<sequence>MAKQATMKNAALKQLTKDADEILHLIKVQLDNLTLPSCPLYEEVLDTQMFGLQKEVDFAVKLGLVDREDGKQIMLRLEKELSKLHEAFTLV</sequence>
<feature type="chain" id="PRO_0000110654" description="UPF0358 protein SAV1112">
    <location>
        <begin position="1"/>
        <end position="91"/>
    </location>
</feature>
<accession>Q99UZ0</accession>
<dbReference type="EMBL" id="BA000017">
    <property type="protein sequence ID" value="BAB57274.1"/>
    <property type="molecule type" value="Genomic_DNA"/>
</dbReference>
<dbReference type="RefSeq" id="WP_001118417.1">
    <property type="nucleotide sequence ID" value="NC_002758.2"/>
</dbReference>
<dbReference type="SMR" id="Q99UZ0"/>
<dbReference type="KEGG" id="sav:SAV1112"/>
<dbReference type="HOGENOM" id="CLU_160493_1_0_9"/>
<dbReference type="PhylomeDB" id="Q99UZ0"/>
<dbReference type="Proteomes" id="UP000002481">
    <property type="component" value="Chromosome"/>
</dbReference>
<dbReference type="Gene3D" id="1.10.287.750">
    <property type="entry name" value="SO2669-like"/>
    <property type="match status" value="1"/>
</dbReference>
<dbReference type="HAMAP" id="MF_01560">
    <property type="entry name" value="UPF0358"/>
    <property type="match status" value="1"/>
</dbReference>
<dbReference type="InterPro" id="IPR009983">
    <property type="entry name" value="UPF0358"/>
</dbReference>
<dbReference type="InterPro" id="IPR036270">
    <property type="entry name" value="UPF0358_sf"/>
</dbReference>
<dbReference type="NCBIfam" id="NF010187">
    <property type="entry name" value="PRK13666.1"/>
    <property type="match status" value="1"/>
</dbReference>
<dbReference type="Pfam" id="PF07408">
    <property type="entry name" value="DUF1507"/>
    <property type="match status" value="1"/>
</dbReference>
<dbReference type="SUPFAM" id="SSF140404">
    <property type="entry name" value="EF2458-like"/>
    <property type="match status" value="1"/>
</dbReference>
<reference key="1">
    <citation type="journal article" date="2001" name="Lancet">
        <title>Whole genome sequencing of meticillin-resistant Staphylococcus aureus.</title>
        <authorList>
            <person name="Kuroda M."/>
            <person name="Ohta T."/>
            <person name="Uchiyama I."/>
            <person name="Baba T."/>
            <person name="Yuzawa H."/>
            <person name="Kobayashi I."/>
            <person name="Cui L."/>
            <person name="Oguchi A."/>
            <person name="Aoki K."/>
            <person name="Nagai Y."/>
            <person name="Lian J.-Q."/>
            <person name="Ito T."/>
            <person name="Kanamori M."/>
            <person name="Matsumaru H."/>
            <person name="Maruyama A."/>
            <person name="Murakami H."/>
            <person name="Hosoyama A."/>
            <person name="Mizutani-Ui Y."/>
            <person name="Takahashi N.K."/>
            <person name="Sawano T."/>
            <person name="Inoue R."/>
            <person name="Kaito C."/>
            <person name="Sekimizu K."/>
            <person name="Hirakawa H."/>
            <person name="Kuhara S."/>
            <person name="Goto S."/>
            <person name="Yabuzaki J."/>
            <person name="Kanehisa M."/>
            <person name="Yamashita A."/>
            <person name="Oshima K."/>
            <person name="Furuya K."/>
            <person name="Yoshino C."/>
            <person name="Shiba T."/>
            <person name="Hattori M."/>
            <person name="Ogasawara N."/>
            <person name="Hayashi H."/>
            <person name="Hiramatsu K."/>
        </authorList>
    </citation>
    <scope>NUCLEOTIDE SEQUENCE [LARGE SCALE GENOMIC DNA]</scope>
    <source>
        <strain>Mu50 / ATCC 700699</strain>
    </source>
</reference>
<evidence type="ECO:0000255" key="1">
    <source>
        <dbReference type="HAMAP-Rule" id="MF_01560"/>
    </source>
</evidence>